<feature type="chain" id="PRO_0000255359" description="Glycerol-3-phosphate dehydrogenase [NAD(P)+]">
    <location>
        <begin position="1"/>
        <end position="329"/>
    </location>
</feature>
<feature type="active site" description="Proton acceptor" evidence="1">
    <location>
        <position position="190"/>
    </location>
</feature>
<feature type="binding site" evidence="1">
    <location>
        <position position="15"/>
    </location>
    <ligand>
        <name>NADPH</name>
        <dbReference type="ChEBI" id="CHEBI:57783"/>
    </ligand>
</feature>
<feature type="binding site" evidence="1">
    <location>
        <position position="35"/>
    </location>
    <ligand>
        <name>NADPH</name>
        <dbReference type="ChEBI" id="CHEBI:57783"/>
    </ligand>
</feature>
<feature type="binding site" evidence="1">
    <location>
        <position position="107"/>
    </location>
    <ligand>
        <name>NADPH</name>
        <dbReference type="ChEBI" id="CHEBI:57783"/>
    </ligand>
</feature>
<feature type="binding site" evidence="1">
    <location>
        <position position="107"/>
    </location>
    <ligand>
        <name>sn-glycerol 3-phosphate</name>
        <dbReference type="ChEBI" id="CHEBI:57597"/>
    </ligand>
</feature>
<feature type="binding site" evidence="1">
    <location>
        <position position="135"/>
    </location>
    <ligand>
        <name>sn-glycerol 3-phosphate</name>
        <dbReference type="ChEBI" id="CHEBI:57597"/>
    </ligand>
</feature>
<feature type="binding site" evidence="1">
    <location>
        <position position="137"/>
    </location>
    <ligand>
        <name>sn-glycerol 3-phosphate</name>
        <dbReference type="ChEBI" id="CHEBI:57597"/>
    </ligand>
</feature>
<feature type="binding site" evidence="1">
    <location>
        <position position="139"/>
    </location>
    <ligand>
        <name>NADPH</name>
        <dbReference type="ChEBI" id="CHEBI:57783"/>
    </ligand>
</feature>
<feature type="binding site" evidence="1">
    <location>
        <position position="190"/>
    </location>
    <ligand>
        <name>sn-glycerol 3-phosphate</name>
        <dbReference type="ChEBI" id="CHEBI:57597"/>
    </ligand>
</feature>
<feature type="binding site" evidence="1">
    <location>
        <position position="243"/>
    </location>
    <ligand>
        <name>sn-glycerol 3-phosphate</name>
        <dbReference type="ChEBI" id="CHEBI:57597"/>
    </ligand>
</feature>
<feature type="binding site" evidence="1">
    <location>
        <position position="253"/>
    </location>
    <ligand>
        <name>sn-glycerol 3-phosphate</name>
        <dbReference type="ChEBI" id="CHEBI:57597"/>
    </ligand>
</feature>
<feature type="binding site" evidence="1">
    <location>
        <position position="254"/>
    </location>
    <ligand>
        <name>NADPH</name>
        <dbReference type="ChEBI" id="CHEBI:57783"/>
    </ligand>
</feature>
<feature type="binding site" evidence="1">
    <location>
        <position position="254"/>
    </location>
    <ligand>
        <name>sn-glycerol 3-phosphate</name>
        <dbReference type="ChEBI" id="CHEBI:57597"/>
    </ligand>
</feature>
<feature type="binding site" evidence="1">
    <location>
        <position position="255"/>
    </location>
    <ligand>
        <name>sn-glycerol 3-phosphate</name>
        <dbReference type="ChEBI" id="CHEBI:57597"/>
    </ligand>
</feature>
<feature type="binding site" evidence="1">
    <location>
        <position position="276"/>
    </location>
    <ligand>
        <name>NADPH</name>
        <dbReference type="ChEBI" id="CHEBI:57783"/>
    </ligand>
</feature>
<feature type="binding site" evidence="1">
    <location>
        <position position="278"/>
    </location>
    <ligand>
        <name>NADPH</name>
        <dbReference type="ChEBI" id="CHEBI:57783"/>
    </ligand>
</feature>
<reference key="1">
    <citation type="submission" date="2006-01" db="EMBL/GenBank/DDBJ databases">
        <title>Complete sequence of Rhodopseudomonas palustris HaA2.</title>
        <authorList>
            <consortium name="US DOE Joint Genome Institute"/>
            <person name="Copeland A."/>
            <person name="Lucas S."/>
            <person name="Lapidus A."/>
            <person name="Barry K."/>
            <person name="Detter J.C."/>
            <person name="Glavina T."/>
            <person name="Hammon N."/>
            <person name="Israni S."/>
            <person name="Pitluck S."/>
            <person name="Chain P."/>
            <person name="Malfatti S."/>
            <person name="Shin M."/>
            <person name="Vergez L."/>
            <person name="Schmutz J."/>
            <person name="Larimer F."/>
            <person name="Land M."/>
            <person name="Hauser L."/>
            <person name="Pelletier D.A."/>
            <person name="Kyrpides N."/>
            <person name="Anderson I."/>
            <person name="Oda Y."/>
            <person name="Harwood C.S."/>
            <person name="Richardson P."/>
        </authorList>
    </citation>
    <scope>NUCLEOTIDE SEQUENCE [LARGE SCALE GENOMIC DNA]</scope>
    <source>
        <strain>HaA2</strain>
    </source>
</reference>
<comment type="function">
    <text evidence="1">Catalyzes the reduction of the glycolytic intermediate dihydroxyacetone phosphate (DHAP) to sn-glycerol 3-phosphate (G3P), the key precursor for phospholipid synthesis.</text>
</comment>
<comment type="catalytic activity">
    <reaction evidence="1">
        <text>sn-glycerol 3-phosphate + NAD(+) = dihydroxyacetone phosphate + NADH + H(+)</text>
        <dbReference type="Rhea" id="RHEA:11092"/>
        <dbReference type="ChEBI" id="CHEBI:15378"/>
        <dbReference type="ChEBI" id="CHEBI:57540"/>
        <dbReference type="ChEBI" id="CHEBI:57597"/>
        <dbReference type="ChEBI" id="CHEBI:57642"/>
        <dbReference type="ChEBI" id="CHEBI:57945"/>
        <dbReference type="EC" id="1.1.1.94"/>
    </reaction>
    <physiologicalReaction direction="right-to-left" evidence="1">
        <dbReference type="Rhea" id="RHEA:11094"/>
    </physiologicalReaction>
</comment>
<comment type="catalytic activity">
    <reaction evidence="1">
        <text>sn-glycerol 3-phosphate + NADP(+) = dihydroxyacetone phosphate + NADPH + H(+)</text>
        <dbReference type="Rhea" id="RHEA:11096"/>
        <dbReference type="ChEBI" id="CHEBI:15378"/>
        <dbReference type="ChEBI" id="CHEBI:57597"/>
        <dbReference type="ChEBI" id="CHEBI:57642"/>
        <dbReference type="ChEBI" id="CHEBI:57783"/>
        <dbReference type="ChEBI" id="CHEBI:58349"/>
        <dbReference type="EC" id="1.1.1.94"/>
    </reaction>
    <physiologicalReaction direction="right-to-left" evidence="1">
        <dbReference type="Rhea" id="RHEA:11098"/>
    </physiologicalReaction>
</comment>
<comment type="pathway">
    <text evidence="1">Membrane lipid metabolism; glycerophospholipid metabolism.</text>
</comment>
<comment type="subcellular location">
    <subcellularLocation>
        <location evidence="1">Cytoplasm</location>
    </subcellularLocation>
</comment>
<comment type="similarity">
    <text evidence="1">Belongs to the NAD-dependent glycerol-3-phosphate dehydrogenase family.</text>
</comment>
<name>GPDA_RHOP2</name>
<gene>
    <name evidence="1" type="primary">gpsA</name>
    <name type="ordered locus">RPB_0316</name>
</gene>
<protein>
    <recommendedName>
        <fullName evidence="1">Glycerol-3-phosphate dehydrogenase [NAD(P)+]</fullName>
        <ecNumber evidence="1">1.1.1.94</ecNumber>
    </recommendedName>
    <alternativeName>
        <fullName evidence="1">NAD(P)(+)-dependent glycerol-3-phosphate dehydrogenase</fullName>
    </alternativeName>
    <alternativeName>
        <fullName evidence="1">NAD(P)H-dependent dihydroxyacetone-phosphate reductase</fullName>
    </alternativeName>
</protein>
<accession>Q2J3D3</accession>
<evidence type="ECO:0000255" key="1">
    <source>
        <dbReference type="HAMAP-Rule" id="MF_00394"/>
    </source>
</evidence>
<sequence>MSSFDTIAVLGGGAWGTALALTAARAGRSVTLWEHDAGNAQHLIEARESRFLPGVRLDDSIKVTQDLAEAARAQALLLVVPAQVLRSVATSLQPLIAARTPLIACAKGIEHGTHRFMTEIIAECAPNAVPAILSGPSFAADVARGLPTAVTIAATDADVAQALAQAMNSGSFRPYHSTDVRGVELGGATKNVMAIAAGIVAGRQLGASALAAMTTRGFVELVRFGKAYGARIETMHGLSGLGDLTMCCSTPQSRNFSFGMALGRGESIDTAAHGKLAEGYYTAPVLLEMAQAKGVEMPISTAVAAILDGRLGVDAAIEGLLTRPLKAEE</sequence>
<dbReference type="EC" id="1.1.1.94" evidence="1"/>
<dbReference type="EMBL" id="CP000250">
    <property type="protein sequence ID" value="ABD05027.1"/>
    <property type="molecule type" value="Genomic_DNA"/>
</dbReference>
<dbReference type="RefSeq" id="WP_011439217.1">
    <property type="nucleotide sequence ID" value="NC_007778.1"/>
</dbReference>
<dbReference type="SMR" id="Q2J3D3"/>
<dbReference type="STRING" id="316058.RPB_0316"/>
<dbReference type="KEGG" id="rpb:RPB_0316"/>
<dbReference type="eggNOG" id="COG0240">
    <property type="taxonomic scope" value="Bacteria"/>
</dbReference>
<dbReference type="HOGENOM" id="CLU_033449_0_2_5"/>
<dbReference type="OrthoDB" id="9812273at2"/>
<dbReference type="UniPathway" id="UPA00940"/>
<dbReference type="Proteomes" id="UP000008809">
    <property type="component" value="Chromosome"/>
</dbReference>
<dbReference type="GO" id="GO:0005829">
    <property type="term" value="C:cytosol"/>
    <property type="evidence" value="ECO:0007669"/>
    <property type="project" value="TreeGrafter"/>
</dbReference>
<dbReference type="GO" id="GO:0047952">
    <property type="term" value="F:glycerol-3-phosphate dehydrogenase [NAD(P)+] activity"/>
    <property type="evidence" value="ECO:0007669"/>
    <property type="project" value="UniProtKB-UniRule"/>
</dbReference>
<dbReference type="GO" id="GO:0051287">
    <property type="term" value="F:NAD binding"/>
    <property type="evidence" value="ECO:0007669"/>
    <property type="project" value="InterPro"/>
</dbReference>
<dbReference type="GO" id="GO:0005975">
    <property type="term" value="P:carbohydrate metabolic process"/>
    <property type="evidence" value="ECO:0007669"/>
    <property type="project" value="InterPro"/>
</dbReference>
<dbReference type="GO" id="GO:0046167">
    <property type="term" value="P:glycerol-3-phosphate biosynthetic process"/>
    <property type="evidence" value="ECO:0007669"/>
    <property type="project" value="UniProtKB-UniRule"/>
</dbReference>
<dbReference type="GO" id="GO:0046168">
    <property type="term" value="P:glycerol-3-phosphate catabolic process"/>
    <property type="evidence" value="ECO:0007669"/>
    <property type="project" value="InterPro"/>
</dbReference>
<dbReference type="GO" id="GO:0006650">
    <property type="term" value="P:glycerophospholipid metabolic process"/>
    <property type="evidence" value="ECO:0007669"/>
    <property type="project" value="UniProtKB-UniRule"/>
</dbReference>
<dbReference type="GO" id="GO:0008654">
    <property type="term" value="P:phospholipid biosynthetic process"/>
    <property type="evidence" value="ECO:0007669"/>
    <property type="project" value="UniProtKB-KW"/>
</dbReference>
<dbReference type="FunFam" id="3.40.50.720:FF:000019">
    <property type="entry name" value="Glycerol-3-phosphate dehydrogenase [NAD(P)+]"/>
    <property type="match status" value="1"/>
</dbReference>
<dbReference type="Gene3D" id="1.10.1040.10">
    <property type="entry name" value="N-(1-d-carboxylethyl)-l-norvaline Dehydrogenase, domain 2"/>
    <property type="match status" value="1"/>
</dbReference>
<dbReference type="Gene3D" id="3.40.50.720">
    <property type="entry name" value="NAD(P)-binding Rossmann-like Domain"/>
    <property type="match status" value="1"/>
</dbReference>
<dbReference type="HAMAP" id="MF_00394">
    <property type="entry name" value="NAD_Glyc3P_dehydrog"/>
    <property type="match status" value="1"/>
</dbReference>
<dbReference type="InterPro" id="IPR008927">
    <property type="entry name" value="6-PGluconate_DH-like_C_sf"/>
</dbReference>
<dbReference type="InterPro" id="IPR013328">
    <property type="entry name" value="6PGD_dom2"/>
</dbReference>
<dbReference type="InterPro" id="IPR006168">
    <property type="entry name" value="G3P_DH_NAD-dep"/>
</dbReference>
<dbReference type="InterPro" id="IPR006109">
    <property type="entry name" value="G3P_DH_NAD-dep_C"/>
</dbReference>
<dbReference type="InterPro" id="IPR011128">
    <property type="entry name" value="G3P_DH_NAD-dep_N"/>
</dbReference>
<dbReference type="InterPro" id="IPR036291">
    <property type="entry name" value="NAD(P)-bd_dom_sf"/>
</dbReference>
<dbReference type="NCBIfam" id="NF000940">
    <property type="entry name" value="PRK00094.1-2"/>
    <property type="match status" value="1"/>
</dbReference>
<dbReference type="NCBIfam" id="NF000942">
    <property type="entry name" value="PRK00094.1-4"/>
    <property type="match status" value="1"/>
</dbReference>
<dbReference type="PANTHER" id="PTHR11728">
    <property type="entry name" value="GLYCEROL-3-PHOSPHATE DEHYDROGENASE"/>
    <property type="match status" value="1"/>
</dbReference>
<dbReference type="PANTHER" id="PTHR11728:SF1">
    <property type="entry name" value="GLYCEROL-3-PHOSPHATE DEHYDROGENASE [NAD(+)] 2, CHLOROPLASTIC"/>
    <property type="match status" value="1"/>
</dbReference>
<dbReference type="Pfam" id="PF07479">
    <property type="entry name" value="NAD_Gly3P_dh_C"/>
    <property type="match status" value="1"/>
</dbReference>
<dbReference type="Pfam" id="PF01210">
    <property type="entry name" value="NAD_Gly3P_dh_N"/>
    <property type="match status" value="1"/>
</dbReference>
<dbReference type="PIRSF" id="PIRSF000114">
    <property type="entry name" value="Glycerol-3-P_dh"/>
    <property type="match status" value="1"/>
</dbReference>
<dbReference type="PRINTS" id="PR00077">
    <property type="entry name" value="GPDHDRGNASE"/>
</dbReference>
<dbReference type="SUPFAM" id="SSF48179">
    <property type="entry name" value="6-phosphogluconate dehydrogenase C-terminal domain-like"/>
    <property type="match status" value="1"/>
</dbReference>
<dbReference type="SUPFAM" id="SSF51735">
    <property type="entry name" value="NAD(P)-binding Rossmann-fold domains"/>
    <property type="match status" value="1"/>
</dbReference>
<dbReference type="PROSITE" id="PS00957">
    <property type="entry name" value="NAD_G3PDH"/>
    <property type="match status" value="1"/>
</dbReference>
<organism>
    <name type="scientific">Rhodopseudomonas palustris (strain HaA2)</name>
    <dbReference type="NCBI Taxonomy" id="316058"/>
    <lineage>
        <taxon>Bacteria</taxon>
        <taxon>Pseudomonadati</taxon>
        <taxon>Pseudomonadota</taxon>
        <taxon>Alphaproteobacteria</taxon>
        <taxon>Hyphomicrobiales</taxon>
        <taxon>Nitrobacteraceae</taxon>
        <taxon>Rhodopseudomonas</taxon>
    </lineage>
</organism>
<proteinExistence type="inferred from homology"/>
<keyword id="KW-0963">Cytoplasm</keyword>
<keyword id="KW-0444">Lipid biosynthesis</keyword>
<keyword id="KW-0443">Lipid metabolism</keyword>
<keyword id="KW-0520">NAD</keyword>
<keyword id="KW-0521">NADP</keyword>
<keyword id="KW-0547">Nucleotide-binding</keyword>
<keyword id="KW-0560">Oxidoreductase</keyword>
<keyword id="KW-0594">Phospholipid biosynthesis</keyword>
<keyword id="KW-1208">Phospholipid metabolism</keyword>
<keyword id="KW-1185">Reference proteome</keyword>